<organism>
    <name type="scientific">Lachnoclostridium phytofermentans (strain ATCC 700394 / DSM 18823 / ISDg)</name>
    <name type="common">Clostridium phytofermentans</name>
    <dbReference type="NCBI Taxonomy" id="357809"/>
    <lineage>
        <taxon>Bacteria</taxon>
        <taxon>Bacillati</taxon>
        <taxon>Bacillota</taxon>
        <taxon>Clostridia</taxon>
        <taxon>Lachnospirales</taxon>
        <taxon>Lachnospiraceae</taxon>
    </lineage>
</organism>
<evidence type="ECO:0000255" key="1">
    <source>
        <dbReference type="HAMAP-Rule" id="MF_00382"/>
    </source>
</evidence>
<evidence type="ECO:0000305" key="2"/>
<sequence length="118" mass="13258">MARIKGGLNAKKKHNKVLKLAKGYRGARSKQYRVAKQSVMRALTSAFAGRKERKRQFRQLWIARINAAARMNGLSYSKFMYGLKLAEVSVNRKMLAELAVNDAEGFKALVEVAKSKLA</sequence>
<proteinExistence type="inferred from homology"/>
<name>RL20_LACP7</name>
<reference key="1">
    <citation type="submission" date="2007-11" db="EMBL/GenBank/DDBJ databases">
        <title>Complete genome sequence of Clostridium phytofermentans ISDg.</title>
        <authorList>
            <person name="Leschine S.B."/>
            <person name="Warnick T.A."/>
            <person name="Blanchard J.L."/>
            <person name="Schnell D.J."/>
            <person name="Petit E.L."/>
            <person name="LaTouf W.G."/>
            <person name="Copeland A."/>
            <person name="Lucas S."/>
            <person name="Lapidus A."/>
            <person name="Barry K."/>
            <person name="Glavina del Rio T."/>
            <person name="Dalin E."/>
            <person name="Tice H."/>
            <person name="Pitluck S."/>
            <person name="Kiss H."/>
            <person name="Brettin T."/>
            <person name="Bruce D."/>
            <person name="Detter J.C."/>
            <person name="Han C."/>
            <person name="Kuske C."/>
            <person name="Schmutz J."/>
            <person name="Larimer F."/>
            <person name="Land M."/>
            <person name="Hauser L."/>
            <person name="Kyrpides N."/>
            <person name="Kim E.A."/>
            <person name="Richardson P."/>
        </authorList>
    </citation>
    <scope>NUCLEOTIDE SEQUENCE [LARGE SCALE GENOMIC DNA]</scope>
    <source>
        <strain>ATCC 700394 / DSM 18823 / ISDg</strain>
    </source>
</reference>
<dbReference type="EMBL" id="CP000885">
    <property type="protein sequence ID" value="ABX40836.1"/>
    <property type="molecule type" value="Genomic_DNA"/>
</dbReference>
<dbReference type="RefSeq" id="WP_012198480.1">
    <property type="nucleotide sequence ID" value="NC_010001.1"/>
</dbReference>
<dbReference type="SMR" id="A9KHG9"/>
<dbReference type="STRING" id="357809.Cphy_0449"/>
<dbReference type="KEGG" id="cpy:Cphy_0449"/>
<dbReference type="eggNOG" id="COG0292">
    <property type="taxonomic scope" value="Bacteria"/>
</dbReference>
<dbReference type="HOGENOM" id="CLU_123265_0_1_9"/>
<dbReference type="OrthoDB" id="9808966at2"/>
<dbReference type="Proteomes" id="UP000000370">
    <property type="component" value="Chromosome"/>
</dbReference>
<dbReference type="GO" id="GO:1990904">
    <property type="term" value="C:ribonucleoprotein complex"/>
    <property type="evidence" value="ECO:0007669"/>
    <property type="project" value="UniProtKB-KW"/>
</dbReference>
<dbReference type="GO" id="GO:0005840">
    <property type="term" value="C:ribosome"/>
    <property type="evidence" value="ECO:0007669"/>
    <property type="project" value="UniProtKB-KW"/>
</dbReference>
<dbReference type="GO" id="GO:0019843">
    <property type="term" value="F:rRNA binding"/>
    <property type="evidence" value="ECO:0007669"/>
    <property type="project" value="UniProtKB-UniRule"/>
</dbReference>
<dbReference type="GO" id="GO:0003735">
    <property type="term" value="F:structural constituent of ribosome"/>
    <property type="evidence" value="ECO:0007669"/>
    <property type="project" value="InterPro"/>
</dbReference>
<dbReference type="GO" id="GO:0000027">
    <property type="term" value="P:ribosomal large subunit assembly"/>
    <property type="evidence" value="ECO:0007669"/>
    <property type="project" value="UniProtKB-UniRule"/>
</dbReference>
<dbReference type="GO" id="GO:0006412">
    <property type="term" value="P:translation"/>
    <property type="evidence" value="ECO:0007669"/>
    <property type="project" value="InterPro"/>
</dbReference>
<dbReference type="CDD" id="cd07026">
    <property type="entry name" value="Ribosomal_L20"/>
    <property type="match status" value="1"/>
</dbReference>
<dbReference type="FunFam" id="1.10.1900.20:FF:000001">
    <property type="entry name" value="50S ribosomal protein L20"/>
    <property type="match status" value="1"/>
</dbReference>
<dbReference type="Gene3D" id="6.10.160.10">
    <property type="match status" value="1"/>
</dbReference>
<dbReference type="Gene3D" id="1.10.1900.20">
    <property type="entry name" value="Ribosomal protein L20"/>
    <property type="match status" value="1"/>
</dbReference>
<dbReference type="HAMAP" id="MF_00382">
    <property type="entry name" value="Ribosomal_bL20"/>
    <property type="match status" value="1"/>
</dbReference>
<dbReference type="InterPro" id="IPR005813">
    <property type="entry name" value="Ribosomal_bL20"/>
</dbReference>
<dbReference type="InterPro" id="IPR049946">
    <property type="entry name" value="RIBOSOMAL_L20_CS"/>
</dbReference>
<dbReference type="InterPro" id="IPR035566">
    <property type="entry name" value="Ribosomal_protein_bL20_C"/>
</dbReference>
<dbReference type="NCBIfam" id="TIGR01032">
    <property type="entry name" value="rplT_bact"/>
    <property type="match status" value="1"/>
</dbReference>
<dbReference type="PANTHER" id="PTHR10986">
    <property type="entry name" value="39S RIBOSOMAL PROTEIN L20"/>
    <property type="match status" value="1"/>
</dbReference>
<dbReference type="Pfam" id="PF00453">
    <property type="entry name" value="Ribosomal_L20"/>
    <property type="match status" value="1"/>
</dbReference>
<dbReference type="PRINTS" id="PR00062">
    <property type="entry name" value="RIBOSOMALL20"/>
</dbReference>
<dbReference type="SUPFAM" id="SSF74731">
    <property type="entry name" value="Ribosomal protein L20"/>
    <property type="match status" value="1"/>
</dbReference>
<dbReference type="PROSITE" id="PS00937">
    <property type="entry name" value="RIBOSOMAL_L20"/>
    <property type="match status" value="1"/>
</dbReference>
<gene>
    <name evidence="1" type="primary">rplT</name>
    <name type="ordered locus">Cphy_0449</name>
</gene>
<feature type="chain" id="PRO_1000080066" description="Large ribosomal subunit protein bL20">
    <location>
        <begin position="1"/>
        <end position="118"/>
    </location>
</feature>
<keyword id="KW-1185">Reference proteome</keyword>
<keyword id="KW-0687">Ribonucleoprotein</keyword>
<keyword id="KW-0689">Ribosomal protein</keyword>
<keyword id="KW-0694">RNA-binding</keyword>
<keyword id="KW-0699">rRNA-binding</keyword>
<comment type="function">
    <text evidence="1">Binds directly to 23S ribosomal RNA and is necessary for the in vitro assembly process of the 50S ribosomal subunit. It is not involved in the protein synthesizing functions of that subunit.</text>
</comment>
<comment type="similarity">
    <text evidence="1">Belongs to the bacterial ribosomal protein bL20 family.</text>
</comment>
<accession>A9KHG9</accession>
<protein>
    <recommendedName>
        <fullName evidence="1">Large ribosomal subunit protein bL20</fullName>
    </recommendedName>
    <alternativeName>
        <fullName evidence="2">50S ribosomal protein L20</fullName>
    </alternativeName>
</protein>